<feature type="chain" id="PRO_0000350107" description="Dual-specificity RNA methyltransferase RlmN">
    <location>
        <begin position="1"/>
        <end position="364"/>
    </location>
</feature>
<feature type="domain" description="Radical SAM core" evidence="2">
    <location>
        <begin position="97"/>
        <end position="333"/>
    </location>
</feature>
<feature type="active site" description="Proton acceptor" evidence="1">
    <location>
        <position position="91"/>
    </location>
</feature>
<feature type="active site" description="S-methylcysteine intermediate" evidence="1">
    <location>
        <position position="338"/>
    </location>
</feature>
<feature type="binding site" evidence="1">
    <location>
        <position position="111"/>
    </location>
    <ligand>
        <name>[4Fe-4S] cluster</name>
        <dbReference type="ChEBI" id="CHEBI:49883"/>
        <note>4Fe-4S-S-AdoMet</note>
    </ligand>
</feature>
<feature type="binding site" evidence="1">
    <location>
        <position position="115"/>
    </location>
    <ligand>
        <name>[4Fe-4S] cluster</name>
        <dbReference type="ChEBI" id="CHEBI:49883"/>
        <note>4Fe-4S-S-AdoMet</note>
    </ligand>
</feature>
<feature type="binding site" evidence="1">
    <location>
        <position position="118"/>
    </location>
    <ligand>
        <name>[4Fe-4S] cluster</name>
        <dbReference type="ChEBI" id="CHEBI:49883"/>
        <note>4Fe-4S-S-AdoMet</note>
    </ligand>
</feature>
<feature type="binding site" evidence="1">
    <location>
        <begin position="164"/>
        <end position="165"/>
    </location>
    <ligand>
        <name>S-adenosyl-L-methionine</name>
        <dbReference type="ChEBI" id="CHEBI:59789"/>
    </ligand>
</feature>
<feature type="binding site" evidence="1">
    <location>
        <position position="196"/>
    </location>
    <ligand>
        <name>S-adenosyl-L-methionine</name>
        <dbReference type="ChEBI" id="CHEBI:59789"/>
    </ligand>
</feature>
<feature type="binding site" evidence="1">
    <location>
        <begin position="218"/>
        <end position="220"/>
    </location>
    <ligand>
        <name>S-adenosyl-L-methionine</name>
        <dbReference type="ChEBI" id="CHEBI:59789"/>
    </ligand>
</feature>
<feature type="binding site" evidence="1">
    <location>
        <position position="295"/>
    </location>
    <ligand>
        <name>S-adenosyl-L-methionine</name>
        <dbReference type="ChEBI" id="CHEBI:59789"/>
    </ligand>
</feature>
<feature type="disulfide bond" description="(transient)" evidence="1">
    <location>
        <begin position="104"/>
        <end position="338"/>
    </location>
</feature>
<dbReference type="EC" id="2.1.1.192" evidence="1"/>
<dbReference type="EMBL" id="AE016825">
    <property type="protein sequence ID" value="AAQ61203.1"/>
    <property type="molecule type" value="Genomic_DNA"/>
</dbReference>
<dbReference type="RefSeq" id="WP_011137088.1">
    <property type="nucleotide sequence ID" value="NC_005085.1"/>
</dbReference>
<dbReference type="SMR" id="Q7NS85"/>
<dbReference type="STRING" id="243365.CV_3541"/>
<dbReference type="GeneID" id="66364768"/>
<dbReference type="KEGG" id="cvi:CV_3541"/>
<dbReference type="eggNOG" id="COG0820">
    <property type="taxonomic scope" value="Bacteria"/>
</dbReference>
<dbReference type="HOGENOM" id="CLU_029101_0_0_4"/>
<dbReference type="OrthoDB" id="9793973at2"/>
<dbReference type="Proteomes" id="UP000001424">
    <property type="component" value="Chromosome"/>
</dbReference>
<dbReference type="GO" id="GO:0005737">
    <property type="term" value="C:cytoplasm"/>
    <property type="evidence" value="ECO:0007669"/>
    <property type="project" value="UniProtKB-SubCell"/>
</dbReference>
<dbReference type="GO" id="GO:0051539">
    <property type="term" value="F:4 iron, 4 sulfur cluster binding"/>
    <property type="evidence" value="ECO:0007669"/>
    <property type="project" value="UniProtKB-UniRule"/>
</dbReference>
<dbReference type="GO" id="GO:0046872">
    <property type="term" value="F:metal ion binding"/>
    <property type="evidence" value="ECO:0007669"/>
    <property type="project" value="UniProtKB-KW"/>
</dbReference>
<dbReference type="GO" id="GO:0070040">
    <property type="term" value="F:rRNA (adenine(2503)-C2-)-methyltransferase activity"/>
    <property type="evidence" value="ECO:0007669"/>
    <property type="project" value="UniProtKB-UniRule"/>
</dbReference>
<dbReference type="GO" id="GO:0019843">
    <property type="term" value="F:rRNA binding"/>
    <property type="evidence" value="ECO:0007669"/>
    <property type="project" value="UniProtKB-UniRule"/>
</dbReference>
<dbReference type="GO" id="GO:0002935">
    <property type="term" value="F:tRNA (adenine(37)-C2)-methyltransferase activity"/>
    <property type="evidence" value="ECO:0007669"/>
    <property type="project" value="UniProtKB-UniRule"/>
</dbReference>
<dbReference type="GO" id="GO:0000049">
    <property type="term" value="F:tRNA binding"/>
    <property type="evidence" value="ECO:0007669"/>
    <property type="project" value="UniProtKB-UniRule"/>
</dbReference>
<dbReference type="GO" id="GO:0070475">
    <property type="term" value="P:rRNA base methylation"/>
    <property type="evidence" value="ECO:0007669"/>
    <property type="project" value="UniProtKB-UniRule"/>
</dbReference>
<dbReference type="GO" id="GO:0030488">
    <property type="term" value="P:tRNA methylation"/>
    <property type="evidence" value="ECO:0007669"/>
    <property type="project" value="UniProtKB-UniRule"/>
</dbReference>
<dbReference type="CDD" id="cd01335">
    <property type="entry name" value="Radical_SAM"/>
    <property type="match status" value="1"/>
</dbReference>
<dbReference type="FunFam" id="1.10.150.530:FF:000003">
    <property type="entry name" value="Dual-specificity RNA methyltransferase RlmN"/>
    <property type="match status" value="1"/>
</dbReference>
<dbReference type="FunFam" id="3.20.20.70:FF:000008">
    <property type="entry name" value="Dual-specificity RNA methyltransferase RlmN"/>
    <property type="match status" value="1"/>
</dbReference>
<dbReference type="Gene3D" id="1.10.150.530">
    <property type="match status" value="1"/>
</dbReference>
<dbReference type="Gene3D" id="3.20.20.70">
    <property type="entry name" value="Aldolase class I"/>
    <property type="match status" value="1"/>
</dbReference>
<dbReference type="HAMAP" id="MF_01849">
    <property type="entry name" value="RNA_methyltr_RlmN"/>
    <property type="match status" value="1"/>
</dbReference>
<dbReference type="InterPro" id="IPR013785">
    <property type="entry name" value="Aldolase_TIM"/>
</dbReference>
<dbReference type="InterPro" id="IPR040072">
    <property type="entry name" value="Methyltransferase_A"/>
</dbReference>
<dbReference type="InterPro" id="IPR048641">
    <property type="entry name" value="RlmN_N"/>
</dbReference>
<dbReference type="InterPro" id="IPR027492">
    <property type="entry name" value="RNA_MTrfase_RlmN"/>
</dbReference>
<dbReference type="InterPro" id="IPR004383">
    <property type="entry name" value="rRNA_lsu_MTrfase_RlmN/Cfr"/>
</dbReference>
<dbReference type="InterPro" id="IPR007197">
    <property type="entry name" value="rSAM"/>
</dbReference>
<dbReference type="NCBIfam" id="TIGR00048">
    <property type="entry name" value="rRNA_mod_RlmN"/>
    <property type="match status" value="1"/>
</dbReference>
<dbReference type="PANTHER" id="PTHR30544">
    <property type="entry name" value="23S RRNA METHYLTRANSFERASE"/>
    <property type="match status" value="1"/>
</dbReference>
<dbReference type="PANTHER" id="PTHR30544:SF5">
    <property type="entry name" value="RADICAL SAM CORE DOMAIN-CONTAINING PROTEIN"/>
    <property type="match status" value="1"/>
</dbReference>
<dbReference type="Pfam" id="PF04055">
    <property type="entry name" value="Radical_SAM"/>
    <property type="match status" value="1"/>
</dbReference>
<dbReference type="Pfam" id="PF21016">
    <property type="entry name" value="RlmN_N"/>
    <property type="match status" value="1"/>
</dbReference>
<dbReference type="PIRSF" id="PIRSF006004">
    <property type="entry name" value="CHP00048"/>
    <property type="match status" value="1"/>
</dbReference>
<dbReference type="SFLD" id="SFLDF00275">
    <property type="entry name" value="adenosine_C2_methyltransferase"/>
    <property type="match status" value="1"/>
</dbReference>
<dbReference type="SFLD" id="SFLDG01062">
    <property type="entry name" value="methyltransferase_(Class_A)"/>
    <property type="match status" value="1"/>
</dbReference>
<dbReference type="SUPFAM" id="SSF102114">
    <property type="entry name" value="Radical SAM enzymes"/>
    <property type="match status" value="1"/>
</dbReference>
<dbReference type="PROSITE" id="PS51918">
    <property type="entry name" value="RADICAL_SAM"/>
    <property type="match status" value="1"/>
</dbReference>
<name>RLMN_CHRVO</name>
<protein>
    <recommendedName>
        <fullName evidence="1">Dual-specificity RNA methyltransferase RlmN</fullName>
        <ecNumber evidence="1">2.1.1.192</ecNumber>
    </recommendedName>
    <alternativeName>
        <fullName evidence="1">23S rRNA (adenine(2503)-C(2))-methyltransferase</fullName>
    </alternativeName>
    <alternativeName>
        <fullName evidence="1">23S rRNA m2A2503 methyltransferase</fullName>
    </alternativeName>
    <alternativeName>
        <fullName evidence="1">Ribosomal RNA large subunit methyltransferase N</fullName>
    </alternativeName>
    <alternativeName>
        <fullName evidence="1">tRNA (adenine(37)-C(2))-methyltransferase</fullName>
    </alternativeName>
    <alternativeName>
        <fullName evidence="1">tRNA m2A37 methyltransferase</fullName>
    </alternativeName>
</protein>
<comment type="function">
    <text evidence="1">Specifically methylates position 2 of adenine 2503 in 23S rRNA and position 2 of adenine 37 in tRNAs. m2A2503 modification seems to play a crucial role in the proofreading step occurring at the peptidyl transferase center and thus would serve to optimize ribosomal fidelity.</text>
</comment>
<comment type="catalytic activity">
    <reaction evidence="1">
        <text>adenosine(2503) in 23S rRNA + 2 reduced [2Fe-2S]-[ferredoxin] + 2 S-adenosyl-L-methionine = 2-methyladenosine(2503) in 23S rRNA + 5'-deoxyadenosine + L-methionine + 2 oxidized [2Fe-2S]-[ferredoxin] + S-adenosyl-L-homocysteine</text>
        <dbReference type="Rhea" id="RHEA:42916"/>
        <dbReference type="Rhea" id="RHEA-COMP:10000"/>
        <dbReference type="Rhea" id="RHEA-COMP:10001"/>
        <dbReference type="Rhea" id="RHEA-COMP:10152"/>
        <dbReference type="Rhea" id="RHEA-COMP:10282"/>
        <dbReference type="ChEBI" id="CHEBI:17319"/>
        <dbReference type="ChEBI" id="CHEBI:33737"/>
        <dbReference type="ChEBI" id="CHEBI:33738"/>
        <dbReference type="ChEBI" id="CHEBI:57844"/>
        <dbReference type="ChEBI" id="CHEBI:57856"/>
        <dbReference type="ChEBI" id="CHEBI:59789"/>
        <dbReference type="ChEBI" id="CHEBI:74411"/>
        <dbReference type="ChEBI" id="CHEBI:74497"/>
        <dbReference type="EC" id="2.1.1.192"/>
    </reaction>
</comment>
<comment type="catalytic activity">
    <reaction evidence="1">
        <text>adenosine(37) in tRNA + 2 reduced [2Fe-2S]-[ferredoxin] + 2 S-adenosyl-L-methionine = 2-methyladenosine(37) in tRNA + 5'-deoxyadenosine + L-methionine + 2 oxidized [2Fe-2S]-[ferredoxin] + S-adenosyl-L-homocysteine</text>
        <dbReference type="Rhea" id="RHEA:43332"/>
        <dbReference type="Rhea" id="RHEA-COMP:10000"/>
        <dbReference type="Rhea" id="RHEA-COMP:10001"/>
        <dbReference type="Rhea" id="RHEA-COMP:10162"/>
        <dbReference type="Rhea" id="RHEA-COMP:10485"/>
        <dbReference type="ChEBI" id="CHEBI:17319"/>
        <dbReference type="ChEBI" id="CHEBI:33737"/>
        <dbReference type="ChEBI" id="CHEBI:33738"/>
        <dbReference type="ChEBI" id="CHEBI:57844"/>
        <dbReference type="ChEBI" id="CHEBI:57856"/>
        <dbReference type="ChEBI" id="CHEBI:59789"/>
        <dbReference type="ChEBI" id="CHEBI:74411"/>
        <dbReference type="ChEBI" id="CHEBI:74497"/>
        <dbReference type="EC" id="2.1.1.192"/>
    </reaction>
</comment>
<comment type="cofactor">
    <cofactor evidence="1">
        <name>[4Fe-4S] cluster</name>
        <dbReference type="ChEBI" id="CHEBI:49883"/>
    </cofactor>
    <text evidence="1">Binds 1 [4Fe-4S] cluster. The cluster is coordinated with 3 cysteines and an exchangeable S-adenosyl-L-methionine.</text>
</comment>
<comment type="subcellular location">
    <subcellularLocation>
        <location evidence="1">Cytoplasm</location>
    </subcellularLocation>
</comment>
<comment type="miscellaneous">
    <text evidence="1">Reaction proceeds by a ping-pong mechanism involving intermediate methylation of a conserved cysteine residue.</text>
</comment>
<comment type="similarity">
    <text evidence="1">Belongs to the radical SAM superfamily. RlmN family.</text>
</comment>
<accession>Q7NS85</accession>
<gene>
    <name evidence="1" type="primary">rlmN</name>
    <name type="ordered locus">CV_3541</name>
</gene>
<keyword id="KW-0004">4Fe-4S</keyword>
<keyword id="KW-0963">Cytoplasm</keyword>
<keyword id="KW-1015">Disulfide bond</keyword>
<keyword id="KW-0408">Iron</keyword>
<keyword id="KW-0411">Iron-sulfur</keyword>
<keyword id="KW-0479">Metal-binding</keyword>
<keyword id="KW-0489">Methyltransferase</keyword>
<keyword id="KW-1185">Reference proteome</keyword>
<keyword id="KW-0698">rRNA processing</keyword>
<keyword id="KW-0949">S-adenosyl-L-methionine</keyword>
<keyword id="KW-0808">Transferase</keyword>
<keyword id="KW-0819">tRNA processing</keyword>
<organism>
    <name type="scientific">Chromobacterium violaceum (strain ATCC 12472 / DSM 30191 / JCM 1249 / CCUG 213 / NBRC 12614 / NCIMB 9131 / NCTC 9757 / MK)</name>
    <dbReference type="NCBI Taxonomy" id="243365"/>
    <lineage>
        <taxon>Bacteria</taxon>
        <taxon>Pseudomonadati</taxon>
        <taxon>Pseudomonadota</taxon>
        <taxon>Betaproteobacteria</taxon>
        <taxon>Neisseriales</taxon>
        <taxon>Chromobacteriaceae</taxon>
        <taxon>Chromobacterium</taxon>
    </lineage>
</organism>
<proteinExistence type="inferred from homology"/>
<reference key="1">
    <citation type="journal article" date="2003" name="Proc. Natl. Acad. Sci. U.S.A.">
        <title>The complete genome sequence of Chromobacterium violaceum reveals remarkable and exploitable bacterial adaptability.</title>
        <authorList>
            <person name="Vasconcelos A.T.R."/>
            <person name="de Almeida D.F."/>
            <person name="Hungria M."/>
            <person name="Guimaraes C.T."/>
            <person name="Antonio R.V."/>
            <person name="Almeida F.C."/>
            <person name="de Almeida L.G.P."/>
            <person name="de Almeida R."/>
            <person name="Alves-Gomes J.A."/>
            <person name="Andrade E.M."/>
            <person name="Araripe J."/>
            <person name="de Araujo M.F.F."/>
            <person name="Astolfi-Filho S."/>
            <person name="Azevedo V."/>
            <person name="Baptista A.J."/>
            <person name="Bataus L.A.M."/>
            <person name="Batista J.S."/>
            <person name="Belo A."/>
            <person name="van den Berg C."/>
            <person name="Bogo M."/>
            <person name="Bonatto S."/>
            <person name="Bordignon J."/>
            <person name="Brigido M.M."/>
            <person name="Brito C.A."/>
            <person name="Brocchi M."/>
            <person name="Burity H.A."/>
            <person name="Camargo A.A."/>
            <person name="Cardoso D.D.P."/>
            <person name="Carneiro N.P."/>
            <person name="Carraro D.M."/>
            <person name="Carvalho C.M.B."/>
            <person name="Cascardo J.C.M."/>
            <person name="Cavada B.S."/>
            <person name="Chueire L.M.O."/>
            <person name="Creczynski-Pasa T.B."/>
            <person name="Cunha-Junior N.C."/>
            <person name="Fagundes N."/>
            <person name="Falcao C.L."/>
            <person name="Fantinatti F."/>
            <person name="Farias I.P."/>
            <person name="Felipe M.S.S."/>
            <person name="Ferrari L.P."/>
            <person name="Ferro J.A."/>
            <person name="Ferro M.I.T."/>
            <person name="Franco G.R."/>
            <person name="Freitas N.S.A."/>
            <person name="Furlan L.R."/>
            <person name="Gazzinelli R.T."/>
            <person name="Gomes E.A."/>
            <person name="Goncalves P.R."/>
            <person name="Grangeiro T.B."/>
            <person name="Grattapaglia D."/>
            <person name="Grisard E.C."/>
            <person name="Hanna E.S."/>
            <person name="Jardim S.N."/>
            <person name="Laurino J."/>
            <person name="Leoi L.C.T."/>
            <person name="Lima L.F.A."/>
            <person name="Loureiro M.F."/>
            <person name="Lyra M.C.C.P."/>
            <person name="Madeira H.M.F."/>
            <person name="Manfio G.P."/>
            <person name="Maranhao A.Q."/>
            <person name="Martins W.S."/>
            <person name="di Mauro S.M.Z."/>
            <person name="de Medeiros S.R.B."/>
            <person name="Meissner R.V."/>
            <person name="Moreira M.A.M."/>
            <person name="Nascimento F.F."/>
            <person name="Nicolas M.F."/>
            <person name="Oliveira J.G."/>
            <person name="Oliveira S.C."/>
            <person name="Paixao R.F.C."/>
            <person name="Parente J.A."/>
            <person name="Pedrosa F.O."/>
            <person name="Pena S.D.J."/>
            <person name="Pereira J.O."/>
            <person name="Pereira M."/>
            <person name="Pinto L.S.R.C."/>
            <person name="Pinto L.S."/>
            <person name="Porto J.I.R."/>
            <person name="Potrich D.P."/>
            <person name="Ramalho-Neto C.E."/>
            <person name="Reis A.M.M."/>
            <person name="Rigo L.U."/>
            <person name="Rondinelli E."/>
            <person name="Santos E.B.P."/>
            <person name="Santos F.R."/>
            <person name="Schneider M.P.C."/>
            <person name="Seuanez H.N."/>
            <person name="Silva A.M.R."/>
            <person name="da Silva A.L.C."/>
            <person name="Silva D.W."/>
            <person name="Silva R."/>
            <person name="Simoes I.C."/>
            <person name="Simon D."/>
            <person name="Soares C.M.A."/>
            <person name="Soares R.B.A."/>
            <person name="Souza E.M."/>
            <person name="Souza K.R.L."/>
            <person name="Souza R.C."/>
            <person name="Steffens M.B.R."/>
            <person name="Steindel M."/>
            <person name="Teixeira S.R."/>
            <person name="Urmenyi T."/>
            <person name="Vettore A."/>
            <person name="Wassem R."/>
            <person name="Zaha A."/>
            <person name="Simpson A.J.G."/>
        </authorList>
    </citation>
    <scope>NUCLEOTIDE SEQUENCE [LARGE SCALE GENOMIC DNA]</scope>
    <source>
        <strain>ATCC 12472 / DSM 30191 / JCM 1249 / CCUG 213 / NBRC 12614 / NCIMB 9131 / NCTC 9757 / MK</strain>
    </source>
</reference>
<sequence>MKTNLLDFNLDQLTQHFAEMGEKPFRAKQVMRWMHQMAEDDFDAMTDLAKSLRAKLHERAEVRVPSLMTGQASSDGTRKWLLDVGTGNGVETVFIPEDDRGTLCVSSQVGCALECTFCSTGRQGFNRNLSTAEIIGQLWWANKAMGVTPKNERVVSNVVMMGMGEPLANFDNVVSAMQIMLDDHGYGLSRRRVTLSTSGLVPQMDRLREECPVALAVSLHAPNDAIRDVIVPINKKYPLSELMAACRRYLEKAPRDFITFEYVMLDGVNDRPEHARQLLELVRDVPCKFNLIPFNPFPNSGYDRSSNNAIRIFREILQEQGYVVTVRKTRGDDIDAACGQLAGQVQDKTRRQAKWTQIIEDRKS</sequence>
<evidence type="ECO:0000255" key="1">
    <source>
        <dbReference type="HAMAP-Rule" id="MF_01849"/>
    </source>
</evidence>
<evidence type="ECO:0000255" key="2">
    <source>
        <dbReference type="PROSITE-ProRule" id="PRU01266"/>
    </source>
</evidence>